<comment type="function">
    <text evidence="1">Catalyzes the methylation of C-1 in cobalt-precorrin-5B to form cobalt-precorrin-6A.</text>
</comment>
<comment type="catalytic activity">
    <reaction evidence="1">
        <text>Co-precorrin-5B + S-adenosyl-L-methionine = Co-precorrin-6A + S-adenosyl-L-homocysteine</text>
        <dbReference type="Rhea" id="RHEA:26285"/>
        <dbReference type="ChEBI" id="CHEBI:57856"/>
        <dbReference type="ChEBI" id="CHEBI:59789"/>
        <dbReference type="ChEBI" id="CHEBI:60063"/>
        <dbReference type="ChEBI" id="CHEBI:60064"/>
        <dbReference type="EC" id="2.1.1.195"/>
    </reaction>
</comment>
<comment type="pathway">
    <text evidence="1">Cofactor biosynthesis; adenosylcobalamin biosynthesis; cob(II)yrinate a,c-diamide from sirohydrochlorin (anaerobic route): step 6/10.</text>
</comment>
<comment type="similarity">
    <text evidence="1">Belongs to the CbiD family.</text>
</comment>
<organism>
    <name type="scientific">Salmonella enteritidis PT4 (strain P125109)</name>
    <dbReference type="NCBI Taxonomy" id="550537"/>
    <lineage>
        <taxon>Bacteria</taxon>
        <taxon>Pseudomonadati</taxon>
        <taxon>Pseudomonadota</taxon>
        <taxon>Gammaproteobacteria</taxon>
        <taxon>Enterobacterales</taxon>
        <taxon>Enterobacteriaceae</taxon>
        <taxon>Salmonella</taxon>
    </lineage>
</organism>
<proteinExistence type="inferred from homology"/>
<dbReference type="EC" id="2.1.1.195" evidence="1"/>
<dbReference type="EMBL" id="AM933172">
    <property type="protein sequence ID" value="CAR33610.1"/>
    <property type="molecule type" value="Genomic_DNA"/>
</dbReference>
<dbReference type="RefSeq" id="WP_001292910.1">
    <property type="nucleotide sequence ID" value="NC_011294.1"/>
</dbReference>
<dbReference type="SMR" id="B5QYY9"/>
<dbReference type="KEGG" id="set:SEN2030"/>
<dbReference type="HOGENOM" id="CLU_041273_1_0_6"/>
<dbReference type="UniPathway" id="UPA00148">
    <property type="reaction ID" value="UER00227"/>
</dbReference>
<dbReference type="Proteomes" id="UP000000613">
    <property type="component" value="Chromosome"/>
</dbReference>
<dbReference type="GO" id="GO:0043780">
    <property type="term" value="F:cobalt-precorrin-5B C1-methyltransferase activity"/>
    <property type="evidence" value="ECO:0007669"/>
    <property type="project" value="RHEA"/>
</dbReference>
<dbReference type="GO" id="GO:0019251">
    <property type="term" value="P:anaerobic cobalamin biosynthetic process"/>
    <property type="evidence" value="ECO:0007669"/>
    <property type="project" value="UniProtKB-UniRule"/>
</dbReference>
<dbReference type="GO" id="GO:0032259">
    <property type="term" value="P:methylation"/>
    <property type="evidence" value="ECO:0007669"/>
    <property type="project" value="UniProtKB-KW"/>
</dbReference>
<dbReference type="Gene3D" id="3.30.2110.10">
    <property type="entry name" value="CbiD-like"/>
    <property type="match status" value="1"/>
</dbReference>
<dbReference type="HAMAP" id="MF_00787">
    <property type="entry name" value="CbiD"/>
    <property type="match status" value="1"/>
</dbReference>
<dbReference type="InterPro" id="IPR002748">
    <property type="entry name" value="CbiD"/>
</dbReference>
<dbReference type="InterPro" id="IPR036074">
    <property type="entry name" value="CbiD_sf"/>
</dbReference>
<dbReference type="NCBIfam" id="TIGR00312">
    <property type="entry name" value="cbiD"/>
    <property type="match status" value="1"/>
</dbReference>
<dbReference type="PANTHER" id="PTHR35863">
    <property type="entry name" value="COBALT-PRECORRIN-5B C(1)-METHYLTRANSFERASE"/>
    <property type="match status" value="1"/>
</dbReference>
<dbReference type="PANTHER" id="PTHR35863:SF1">
    <property type="entry name" value="COBALT-PRECORRIN-5B C(1)-METHYLTRANSFERASE"/>
    <property type="match status" value="1"/>
</dbReference>
<dbReference type="Pfam" id="PF01888">
    <property type="entry name" value="CbiD"/>
    <property type="match status" value="1"/>
</dbReference>
<dbReference type="PIRSF" id="PIRSF026782">
    <property type="entry name" value="CbiD"/>
    <property type="match status" value="1"/>
</dbReference>
<dbReference type="SUPFAM" id="SSF111342">
    <property type="entry name" value="CbiD-like"/>
    <property type="match status" value="1"/>
</dbReference>
<evidence type="ECO:0000255" key="1">
    <source>
        <dbReference type="HAMAP-Rule" id="MF_00787"/>
    </source>
</evidence>
<name>CBID_SALEP</name>
<gene>
    <name evidence="1" type="primary">cbiD</name>
    <name type="ordered locus">SEN2030</name>
</gene>
<reference key="1">
    <citation type="journal article" date="2008" name="Genome Res.">
        <title>Comparative genome analysis of Salmonella enteritidis PT4 and Salmonella gallinarum 287/91 provides insights into evolutionary and host adaptation pathways.</title>
        <authorList>
            <person name="Thomson N.R."/>
            <person name="Clayton D.J."/>
            <person name="Windhorst D."/>
            <person name="Vernikos G."/>
            <person name="Davidson S."/>
            <person name="Churcher C."/>
            <person name="Quail M.A."/>
            <person name="Stevens M."/>
            <person name="Jones M.A."/>
            <person name="Watson M."/>
            <person name="Barron A."/>
            <person name="Layton A."/>
            <person name="Pickard D."/>
            <person name="Kingsley R.A."/>
            <person name="Bignell A."/>
            <person name="Clark L."/>
            <person name="Harris B."/>
            <person name="Ormond D."/>
            <person name="Abdellah Z."/>
            <person name="Brooks K."/>
            <person name="Cherevach I."/>
            <person name="Chillingworth T."/>
            <person name="Woodward J."/>
            <person name="Norberczak H."/>
            <person name="Lord A."/>
            <person name="Arrowsmith C."/>
            <person name="Jagels K."/>
            <person name="Moule S."/>
            <person name="Mungall K."/>
            <person name="Saunders M."/>
            <person name="Whitehead S."/>
            <person name="Chabalgoity J.A."/>
            <person name="Maskell D."/>
            <person name="Humphreys T."/>
            <person name="Roberts M."/>
            <person name="Barrow P.A."/>
            <person name="Dougan G."/>
            <person name="Parkhill J."/>
        </authorList>
    </citation>
    <scope>NUCLEOTIDE SEQUENCE [LARGE SCALE GENOMIC DNA]</scope>
    <source>
        <strain>P125109</strain>
    </source>
</reference>
<accession>B5QYY9</accession>
<feature type="chain" id="PRO_1000133744" description="Cobalt-precorrin-5B C(1)-methyltransferase">
    <location>
        <begin position="1"/>
        <end position="379"/>
    </location>
</feature>
<protein>
    <recommendedName>
        <fullName evidence="1">Cobalt-precorrin-5B C(1)-methyltransferase</fullName>
        <ecNumber evidence="1">2.1.1.195</ecNumber>
    </recommendedName>
    <alternativeName>
        <fullName evidence="1">Cobalt-precorrin-6A synthase</fullName>
    </alternativeName>
</protein>
<keyword id="KW-0169">Cobalamin biosynthesis</keyword>
<keyword id="KW-0489">Methyltransferase</keyword>
<keyword id="KW-0949">S-adenosyl-L-methionine</keyword>
<keyword id="KW-0808">Transferase</keyword>
<sequence>MSELSFDAPVWHHGKALRKGYTTGSCATAAAKVAALMVLRQHLIHQVSIVTPSGVTLCLNVESPHIEGQQAIAAIRKDGGDDVDATHGMLIFARVTLNDSGEITLTGGEGIGTVTRKGIGLPLGSAAINRTPRHTIESAVREAIGPARGADVEIFAPEGEVRAQKTYNSRLGILGGISIIGTTGIVTPMSEESWKRSLSLELEIKRASGLTRVILVPGNHGERFVREQMGVDTQAVVTMSNFVGYMIEEAVRLGFCQIVLVGHPGKLIKIAAGIFHTHSHIADARMETLVAHLALLGAPLELLTLVGDCDTTEAAMEHIEAYGFGHIYNHLARRICLRVMQMLRFTKTPPVCDAILFSFDNHILGSNRPVDEIAKELQC</sequence>